<feature type="chain" id="PRO_0000374473" description="tRNA-2-methylthio-N(6)-dimethylallyladenosine synthase">
    <location>
        <begin position="1"/>
        <end position="490"/>
    </location>
</feature>
<feature type="domain" description="MTTase N-terminal" evidence="1">
    <location>
        <begin position="37"/>
        <end position="154"/>
    </location>
</feature>
<feature type="domain" description="Radical SAM core" evidence="2">
    <location>
        <begin position="184"/>
        <end position="416"/>
    </location>
</feature>
<feature type="domain" description="TRAM" evidence="1">
    <location>
        <begin position="419"/>
        <end position="487"/>
    </location>
</feature>
<feature type="binding site" evidence="1">
    <location>
        <position position="46"/>
    </location>
    <ligand>
        <name>[4Fe-4S] cluster</name>
        <dbReference type="ChEBI" id="CHEBI:49883"/>
        <label>1</label>
    </ligand>
</feature>
<feature type="binding site" evidence="1">
    <location>
        <position position="83"/>
    </location>
    <ligand>
        <name>[4Fe-4S] cluster</name>
        <dbReference type="ChEBI" id="CHEBI:49883"/>
        <label>1</label>
    </ligand>
</feature>
<feature type="binding site" evidence="1">
    <location>
        <position position="117"/>
    </location>
    <ligand>
        <name>[4Fe-4S] cluster</name>
        <dbReference type="ChEBI" id="CHEBI:49883"/>
        <label>1</label>
    </ligand>
</feature>
<feature type="binding site" evidence="1">
    <location>
        <position position="198"/>
    </location>
    <ligand>
        <name>[4Fe-4S] cluster</name>
        <dbReference type="ChEBI" id="CHEBI:49883"/>
        <label>2</label>
        <note>4Fe-4S-S-AdoMet</note>
    </ligand>
</feature>
<feature type="binding site" evidence="1">
    <location>
        <position position="202"/>
    </location>
    <ligand>
        <name>[4Fe-4S] cluster</name>
        <dbReference type="ChEBI" id="CHEBI:49883"/>
        <label>2</label>
        <note>4Fe-4S-S-AdoMet</note>
    </ligand>
</feature>
<feature type="binding site" evidence="1">
    <location>
        <position position="205"/>
    </location>
    <ligand>
        <name>[4Fe-4S] cluster</name>
        <dbReference type="ChEBI" id="CHEBI:49883"/>
        <label>2</label>
        <note>4Fe-4S-S-AdoMet</note>
    </ligand>
</feature>
<evidence type="ECO:0000255" key="1">
    <source>
        <dbReference type="HAMAP-Rule" id="MF_01864"/>
    </source>
</evidence>
<evidence type="ECO:0000255" key="2">
    <source>
        <dbReference type="PROSITE-ProRule" id="PRU01266"/>
    </source>
</evidence>
<name>MIAB_PSYWF</name>
<keyword id="KW-0004">4Fe-4S</keyword>
<keyword id="KW-0963">Cytoplasm</keyword>
<keyword id="KW-0408">Iron</keyword>
<keyword id="KW-0411">Iron-sulfur</keyword>
<keyword id="KW-0479">Metal-binding</keyword>
<keyword id="KW-0949">S-adenosyl-L-methionine</keyword>
<keyword id="KW-0808">Transferase</keyword>
<keyword id="KW-0819">tRNA processing</keyword>
<organism>
    <name type="scientific">Psychrobacter sp. (strain PRwf-1)</name>
    <dbReference type="NCBI Taxonomy" id="349106"/>
    <lineage>
        <taxon>Bacteria</taxon>
        <taxon>Pseudomonadati</taxon>
        <taxon>Pseudomonadota</taxon>
        <taxon>Gammaproteobacteria</taxon>
        <taxon>Moraxellales</taxon>
        <taxon>Moraxellaceae</taxon>
        <taxon>Psychrobacter</taxon>
    </lineage>
</organism>
<reference key="1">
    <citation type="submission" date="2007-05" db="EMBL/GenBank/DDBJ databases">
        <title>Complete sequence of chromosome of Psychrobacter sp. PRwf-1.</title>
        <authorList>
            <consortium name="US DOE Joint Genome Institute"/>
            <person name="Copeland A."/>
            <person name="Lucas S."/>
            <person name="Lapidus A."/>
            <person name="Barry K."/>
            <person name="Detter J.C."/>
            <person name="Glavina del Rio T."/>
            <person name="Hammon N."/>
            <person name="Israni S."/>
            <person name="Dalin E."/>
            <person name="Tice H."/>
            <person name="Pitluck S."/>
            <person name="Chain P."/>
            <person name="Malfatti S."/>
            <person name="Shin M."/>
            <person name="Vergez L."/>
            <person name="Schmutz J."/>
            <person name="Larimer F."/>
            <person name="Land M."/>
            <person name="Hauser L."/>
            <person name="Kyrpides N."/>
            <person name="Kim E."/>
            <person name="Tiedje J."/>
            <person name="Richardson P."/>
        </authorList>
    </citation>
    <scope>NUCLEOTIDE SEQUENCE [LARGE SCALE GENOMIC DNA]</scope>
    <source>
        <strain>PRwf-1</strain>
    </source>
</reference>
<comment type="function">
    <text evidence="1">Catalyzes the methylthiolation of N6-(dimethylallyl)adenosine (i(6)A), leading to the formation of 2-methylthio-N6-(dimethylallyl)adenosine (ms(2)i(6)A) at position 37 in tRNAs that read codons beginning with uridine.</text>
</comment>
<comment type="catalytic activity">
    <reaction evidence="1">
        <text>N(6)-dimethylallyladenosine(37) in tRNA + (sulfur carrier)-SH + AH2 + 2 S-adenosyl-L-methionine = 2-methylsulfanyl-N(6)-dimethylallyladenosine(37) in tRNA + (sulfur carrier)-H + 5'-deoxyadenosine + L-methionine + A + S-adenosyl-L-homocysteine + 2 H(+)</text>
        <dbReference type="Rhea" id="RHEA:37067"/>
        <dbReference type="Rhea" id="RHEA-COMP:10375"/>
        <dbReference type="Rhea" id="RHEA-COMP:10376"/>
        <dbReference type="Rhea" id="RHEA-COMP:14737"/>
        <dbReference type="Rhea" id="RHEA-COMP:14739"/>
        <dbReference type="ChEBI" id="CHEBI:13193"/>
        <dbReference type="ChEBI" id="CHEBI:15378"/>
        <dbReference type="ChEBI" id="CHEBI:17319"/>
        <dbReference type="ChEBI" id="CHEBI:17499"/>
        <dbReference type="ChEBI" id="CHEBI:29917"/>
        <dbReference type="ChEBI" id="CHEBI:57844"/>
        <dbReference type="ChEBI" id="CHEBI:57856"/>
        <dbReference type="ChEBI" id="CHEBI:59789"/>
        <dbReference type="ChEBI" id="CHEBI:64428"/>
        <dbReference type="ChEBI" id="CHEBI:74415"/>
        <dbReference type="ChEBI" id="CHEBI:74417"/>
        <dbReference type="EC" id="2.8.4.3"/>
    </reaction>
</comment>
<comment type="cofactor">
    <cofactor evidence="1">
        <name>[4Fe-4S] cluster</name>
        <dbReference type="ChEBI" id="CHEBI:49883"/>
    </cofactor>
    <text evidence="1">Binds 2 [4Fe-4S] clusters. One cluster is coordinated with 3 cysteines and an exchangeable S-adenosyl-L-methionine.</text>
</comment>
<comment type="subunit">
    <text evidence="1">Monomer.</text>
</comment>
<comment type="subcellular location">
    <subcellularLocation>
        <location evidence="1">Cytoplasm</location>
    </subcellularLocation>
</comment>
<comment type="similarity">
    <text evidence="1">Belongs to the methylthiotransferase family. MiaB subfamily.</text>
</comment>
<gene>
    <name evidence="1" type="primary">miaB</name>
    <name type="ordered locus">PsycPRwf_1875</name>
</gene>
<protein>
    <recommendedName>
        <fullName evidence="1">tRNA-2-methylthio-N(6)-dimethylallyladenosine synthase</fullName>
        <ecNumber evidence="1">2.8.4.3</ecNumber>
    </recommendedName>
    <alternativeName>
        <fullName evidence="1">(Dimethylallyl)adenosine tRNA methylthiotransferase MiaB</fullName>
    </alternativeName>
    <alternativeName>
        <fullName evidence="1">tRNA-i(6)A37 methylthiotransferase</fullName>
    </alternativeName>
</protein>
<sequence length="490" mass="54898">MSATLFDPKSIAVSNPVDTSTQASLAHASQPTGQAKKKVYIATQGCQMNVYDSEKMGNVLGDSHDMVVTDNIEEADVLLMNTCSIREKAQEKVFSELGRWRKLKEEKPDLVIGVGGCVASQEGDNIQKRAPYVDMVFGPQTLHRLPELYDKSTTQRNVKPKDRIGTVDVSFPSIEKFDFLPEPKVEGYRAFVSIMEGCSKYCSFCVVPYTRGEELSRPLDDVLAEIDSLAEQGVREITLLGQNVNGYRGEKDDGSICRFAELLHYVAHVDGIERIRYTTSHPLEFTDDIIEAYAKLPQLVSHLHLPVQSGSNKILAAMKRNHTIDVYINQINKLMAVRPDMHLSSDFIIGFPGETEEDFLDTLNLAKALDFDHSYSFIYSKRPGTPASELPDDVSLATKKERLAIFQKVIRDSTLKKTEEMVGKTLRVMVEEIADRYPDQLLGTADNTRSVLFKATEQQKTDLMGKFVTVKITDFVSPHMVRGELVDILD</sequence>
<dbReference type="EC" id="2.8.4.3" evidence="1"/>
<dbReference type="EMBL" id="CP000713">
    <property type="protein sequence ID" value="ABQ94815.1"/>
    <property type="molecule type" value="Genomic_DNA"/>
</dbReference>
<dbReference type="SMR" id="A5WGM4"/>
<dbReference type="STRING" id="349106.PsycPRwf_1875"/>
<dbReference type="KEGG" id="prw:PsycPRwf_1875"/>
<dbReference type="eggNOG" id="COG0621">
    <property type="taxonomic scope" value="Bacteria"/>
</dbReference>
<dbReference type="HOGENOM" id="CLU_018697_2_0_6"/>
<dbReference type="GO" id="GO:0005829">
    <property type="term" value="C:cytosol"/>
    <property type="evidence" value="ECO:0007669"/>
    <property type="project" value="TreeGrafter"/>
</dbReference>
<dbReference type="GO" id="GO:0051539">
    <property type="term" value="F:4 iron, 4 sulfur cluster binding"/>
    <property type="evidence" value="ECO:0007669"/>
    <property type="project" value="UniProtKB-UniRule"/>
</dbReference>
<dbReference type="GO" id="GO:0046872">
    <property type="term" value="F:metal ion binding"/>
    <property type="evidence" value="ECO:0007669"/>
    <property type="project" value="UniProtKB-KW"/>
</dbReference>
<dbReference type="GO" id="GO:0035597">
    <property type="term" value="F:N6-isopentenyladenosine methylthiotransferase activity"/>
    <property type="evidence" value="ECO:0007669"/>
    <property type="project" value="TreeGrafter"/>
</dbReference>
<dbReference type="CDD" id="cd01335">
    <property type="entry name" value="Radical_SAM"/>
    <property type="match status" value="1"/>
</dbReference>
<dbReference type="FunFam" id="3.40.50.12160:FF:000001">
    <property type="entry name" value="tRNA-2-methylthio-N(6)-dimethylallyladenosine synthase"/>
    <property type="match status" value="1"/>
</dbReference>
<dbReference type="FunFam" id="3.80.30.20:FF:000001">
    <property type="entry name" value="tRNA-2-methylthio-N(6)-dimethylallyladenosine synthase 2"/>
    <property type="match status" value="1"/>
</dbReference>
<dbReference type="Gene3D" id="3.40.50.12160">
    <property type="entry name" value="Methylthiotransferase, N-terminal domain"/>
    <property type="match status" value="1"/>
</dbReference>
<dbReference type="Gene3D" id="3.80.30.20">
    <property type="entry name" value="tm_1862 like domain"/>
    <property type="match status" value="1"/>
</dbReference>
<dbReference type="HAMAP" id="MF_01864">
    <property type="entry name" value="tRNA_metthiotr_MiaB"/>
    <property type="match status" value="1"/>
</dbReference>
<dbReference type="InterPro" id="IPR006638">
    <property type="entry name" value="Elp3/MiaA/NifB-like_rSAM"/>
</dbReference>
<dbReference type="InterPro" id="IPR005839">
    <property type="entry name" value="Methylthiotransferase"/>
</dbReference>
<dbReference type="InterPro" id="IPR020612">
    <property type="entry name" value="Methylthiotransferase_CS"/>
</dbReference>
<dbReference type="InterPro" id="IPR013848">
    <property type="entry name" value="Methylthiotransferase_N"/>
</dbReference>
<dbReference type="InterPro" id="IPR038135">
    <property type="entry name" value="Methylthiotransferase_N_sf"/>
</dbReference>
<dbReference type="InterPro" id="IPR006463">
    <property type="entry name" value="MiaB_methiolase"/>
</dbReference>
<dbReference type="InterPro" id="IPR007197">
    <property type="entry name" value="rSAM"/>
</dbReference>
<dbReference type="InterPro" id="IPR023404">
    <property type="entry name" value="rSAM_horseshoe"/>
</dbReference>
<dbReference type="InterPro" id="IPR002792">
    <property type="entry name" value="TRAM_dom"/>
</dbReference>
<dbReference type="NCBIfam" id="TIGR01574">
    <property type="entry name" value="miaB-methiolase"/>
    <property type="match status" value="1"/>
</dbReference>
<dbReference type="NCBIfam" id="TIGR00089">
    <property type="entry name" value="MiaB/RimO family radical SAM methylthiotransferase"/>
    <property type="match status" value="1"/>
</dbReference>
<dbReference type="PANTHER" id="PTHR43020">
    <property type="entry name" value="CDK5 REGULATORY SUBUNIT-ASSOCIATED PROTEIN 1"/>
    <property type="match status" value="1"/>
</dbReference>
<dbReference type="PANTHER" id="PTHR43020:SF2">
    <property type="entry name" value="MITOCHONDRIAL TRNA METHYLTHIOTRANSFERASE CDK5RAP1"/>
    <property type="match status" value="1"/>
</dbReference>
<dbReference type="Pfam" id="PF04055">
    <property type="entry name" value="Radical_SAM"/>
    <property type="match status" value="1"/>
</dbReference>
<dbReference type="Pfam" id="PF01938">
    <property type="entry name" value="TRAM"/>
    <property type="match status" value="1"/>
</dbReference>
<dbReference type="Pfam" id="PF00919">
    <property type="entry name" value="UPF0004"/>
    <property type="match status" value="1"/>
</dbReference>
<dbReference type="SFLD" id="SFLDF00273">
    <property type="entry name" value="(dimethylallyl)adenosine_tRNA"/>
    <property type="match status" value="1"/>
</dbReference>
<dbReference type="SFLD" id="SFLDG01082">
    <property type="entry name" value="B12-binding_domain_containing"/>
    <property type="match status" value="1"/>
</dbReference>
<dbReference type="SFLD" id="SFLDG01061">
    <property type="entry name" value="methylthiotransferase"/>
    <property type="match status" value="1"/>
</dbReference>
<dbReference type="SMART" id="SM00729">
    <property type="entry name" value="Elp3"/>
    <property type="match status" value="1"/>
</dbReference>
<dbReference type="SUPFAM" id="SSF102114">
    <property type="entry name" value="Radical SAM enzymes"/>
    <property type="match status" value="1"/>
</dbReference>
<dbReference type="PROSITE" id="PS51449">
    <property type="entry name" value="MTTASE_N"/>
    <property type="match status" value="1"/>
</dbReference>
<dbReference type="PROSITE" id="PS01278">
    <property type="entry name" value="MTTASE_RADICAL"/>
    <property type="match status" value="1"/>
</dbReference>
<dbReference type="PROSITE" id="PS51918">
    <property type="entry name" value="RADICAL_SAM"/>
    <property type="match status" value="1"/>
</dbReference>
<dbReference type="PROSITE" id="PS50926">
    <property type="entry name" value="TRAM"/>
    <property type="match status" value="1"/>
</dbReference>
<accession>A5WGM4</accession>
<proteinExistence type="inferred from homology"/>